<comment type="function">
    <text evidence="1">An accessory protein needed during the final step in the assembly of 30S ribosomal subunit, possibly for assembly of the head region. Essential for efficient processing of 16S rRNA. May be needed both before and after RbfA during the maturation of 16S rRNA. It has affinity for free ribosomal 30S subunits but not for 70S ribosomes.</text>
</comment>
<comment type="subunit">
    <text evidence="1">Binds ribosomal protein uS19.</text>
</comment>
<comment type="subcellular location">
    <subcellularLocation>
        <location evidence="1">Cytoplasm</location>
    </subcellularLocation>
</comment>
<comment type="domain">
    <text evidence="1">The PRC barrel domain binds ribosomal protein uS19.</text>
</comment>
<comment type="similarity">
    <text evidence="1">Belongs to the RimM family.</text>
</comment>
<gene>
    <name evidence="1" type="primary">rimM</name>
    <name type="ordered locus">BP1840</name>
</gene>
<sequence length="207" mass="22474">MSEAAHSGAAPADLVELGRIASAYGVKGWVKVQPHSAQAEVLRTVSHWWLTRPAPQAARDVVASVPRAYQVLQARVHGGAVVAQLAGIDDRDQAEALRGCFVQAARSAFPAPADDEYYWVDLIGCALYSDADGEPRLLGVVDEVFDNGAHAVLKVLRQQIQPGQPGPVPLLDPKGRPLEELVPFVRAHIRHVDLAARRIDSDWPLDY</sequence>
<organism>
    <name type="scientific">Bordetella pertussis (strain Tohama I / ATCC BAA-589 / NCTC 13251)</name>
    <dbReference type="NCBI Taxonomy" id="257313"/>
    <lineage>
        <taxon>Bacteria</taxon>
        <taxon>Pseudomonadati</taxon>
        <taxon>Pseudomonadota</taxon>
        <taxon>Betaproteobacteria</taxon>
        <taxon>Burkholderiales</taxon>
        <taxon>Alcaligenaceae</taxon>
        <taxon>Bordetella</taxon>
    </lineage>
</organism>
<name>RIMM_BORPE</name>
<dbReference type="EMBL" id="BX640416">
    <property type="protein sequence ID" value="CAE42126.1"/>
    <property type="molecule type" value="Genomic_DNA"/>
</dbReference>
<dbReference type="RefSeq" id="NP_880542.1">
    <property type="nucleotide sequence ID" value="NC_002929.2"/>
</dbReference>
<dbReference type="RefSeq" id="WP_010930592.1">
    <property type="nucleotide sequence ID" value="NZ_CP039022.1"/>
</dbReference>
<dbReference type="SMR" id="Q7VXD7"/>
<dbReference type="STRING" id="257313.BP1840"/>
<dbReference type="PaxDb" id="257313-BP1840"/>
<dbReference type="KEGG" id="bpe:BP1840"/>
<dbReference type="PATRIC" id="fig|257313.5.peg.1977"/>
<dbReference type="eggNOG" id="COG0806">
    <property type="taxonomic scope" value="Bacteria"/>
</dbReference>
<dbReference type="HOGENOM" id="CLU_077636_1_0_4"/>
<dbReference type="Proteomes" id="UP000002676">
    <property type="component" value="Chromosome"/>
</dbReference>
<dbReference type="GO" id="GO:0005737">
    <property type="term" value="C:cytoplasm"/>
    <property type="evidence" value="ECO:0007669"/>
    <property type="project" value="UniProtKB-SubCell"/>
</dbReference>
<dbReference type="GO" id="GO:0005840">
    <property type="term" value="C:ribosome"/>
    <property type="evidence" value="ECO:0007669"/>
    <property type="project" value="InterPro"/>
</dbReference>
<dbReference type="GO" id="GO:0043022">
    <property type="term" value="F:ribosome binding"/>
    <property type="evidence" value="ECO:0007669"/>
    <property type="project" value="InterPro"/>
</dbReference>
<dbReference type="GO" id="GO:0042274">
    <property type="term" value="P:ribosomal small subunit biogenesis"/>
    <property type="evidence" value="ECO:0007669"/>
    <property type="project" value="UniProtKB-UniRule"/>
</dbReference>
<dbReference type="GO" id="GO:0006364">
    <property type="term" value="P:rRNA processing"/>
    <property type="evidence" value="ECO:0007669"/>
    <property type="project" value="UniProtKB-UniRule"/>
</dbReference>
<dbReference type="Gene3D" id="2.30.30.240">
    <property type="entry name" value="PRC-barrel domain"/>
    <property type="match status" value="1"/>
</dbReference>
<dbReference type="Gene3D" id="2.40.30.60">
    <property type="entry name" value="RimM"/>
    <property type="match status" value="1"/>
</dbReference>
<dbReference type="HAMAP" id="MF_00014">
    <property type="entry name" value="Ribosome_mat_RimM"/>
    <property type="match status" value="1"/>
</dbReference>
<dbReference type="InterPro" id="IPR011033">
    <property type="entry name" value="PRC_barrel-like_sf"/>
</dbReference>
<dbReference type="InterPro" id="IPR056792">
    <property type="entry name" value="PRC_RimM"/>
</dbReference>
<dbReference type="InterPro" id="IPR011961">
    <property type="entry name" value="RimM"/>
</dbReference>
<dbReference type="InterPro" id="IPR002676">
    <property type="entry name" value="RimM_N"/>
</dbReference>
<dbReference type="InterPro" id="IPR036976">
    <property type="entry name" value="RimM_N_sf"/>
</dbReference>
<dbReference type="InterPro" id="IPR009000">
    <property type="entry name" value="Transl_B-barrel_sf"/>
</dbReference>
<dbReference type="NCBIfam" id="TIGR02273">
    <property type="entry name" value="16S_RimM"/>
    <property type="match status" value="1"/>
</dbReference>
<dbReference type="PANTHER" id="PTHR33692">
    <property type="entry name" value="RIBOSOME MATURATION FACTOR RIMM"/>
    <property type="match status" value="1"/>
</dbReference>
<dbReference type="PANTHER" id="PTHR33692:SF1">
    <property type="entry name" value="RIBOSOME MATURATION FACTOR RIMM"/>
    <property type="match status" value="1"/>
</dbReference>
<dbReference type="Pfam" id="PF24986">
    <property type="entry name" value="PRC_RimM"/>
    <property type="match status" value="1"/>
</dbReference>
<dbReference type="Pfam" id="PF01782">
    <property type="entry name" value="RimM"/>
    <property type="match status" value="1"/>
</dbReference>
<dbReference type="SUPFAM" id="SSF50346">
    <property type="entry name" value="PRC-barrel domain"/>
    <property type="match status" value="1"/>
</dbReference>
<dbReference type="SUPFAM" id="SSF50447">
    <property type="entry name" value="Translation proteins"/>
    <property type="match status" value="1"/>
</dbReference>
<feature type="chain" id="PRO_0000163262" description="Ribosome maturation factor RimM">
    <location>
        <begin position="1"/>
        <end position="207"/>
    </location>
</feature>
<feature type="domain" description="PRC barrel" evidence="1">
    <location>
        <begin position="114"/>
        <end position="207"/>
    </location>
</feature>
<proteinExistence type="inferred from homology"/>
<evidence type="ECO:0000255" key="1">
    <source>
        <dbReference type="HAMAP-Rule" id="MF_00014"/>
    </source>
</evidence>
<protein>
    <recommendedName>
        <fullName evidence="1">Ribosome maturation factor RimM</fullName>
    </recommendedName>
</protein>
<keyword id="KW-0143">Chaperone</keyword>
<keyword id="KW-0963">Cytoplasm</keyword>
<keyword id="KW-1185">Reference proteome</keyword>
<keyword id="KW-0690">Ribosome biogenesis</keyword>
<keyword id="KW-0698">rRNA processing</keyword>
<reference key="1">
    <citation type="journal article" date="2003" name="Nat. Genet.">
        <title>Comparative analysis of the genome sequences of Bordetella pertussis, Bordetella parapertussis and Bordetella bronchiseptica.</title>
        <authorList>
            <person name="Parkhill J."/>
            <person name="Sebaihia M."/>
            <person name="Preston A."/>
            <person name="Murphy L.D."/>
            <person name="Thomson N.R."/>
            <person name="Harris D.E."/>
            <person name="Holden M.T.G."/>
            <person name="Churcher C.M."/>
            <person name="Bentley S.D."/>
            <person name="Mungall K.L."/>
            <person name="Cerdeno-Tarraga A.-M."/>
            <person name="Temple L."/>
            <person name="James K.D."/>
            <person name="Harris B."/>
            <person name="Quail M.A."/>
            <person name="Achtman M."/>
            <person name="Atkin R."/>
            <person name="Baker S."/>
            <person name="Basham D."/>
            <person name="Bason N."/>
            <person name="Cherevach I."/>
            <person name="Chillingworth T."/>
            <person name="Collins M."/>
            <person name="Cronin A."/>
            <person name="Davis P."/>
            <person name="Doggett J."/>
            <person name="Feltwell T."/>
            <person name="Goble A."/>
            <person name="Hamlin N."/>
            <person name="Hauser H."/>
            <person name="Holroyd S."/>
            <person name="Jagels K."/>
            <person name="Leather S."/>
            <person name="Moule S."/>
            <person name="Norberczak H."/>
            <person name="O'Neil S."/>
            <person name="Ormond D."/>
            <person name="Price C."/>
            <person name="Rabbinowitsch E."/>
            <person name="Rutter S."/>
            <person name="Sanders M."/>
            <person name="Saunders D."/>
            <person name="Seeger K."/>
            <person name="Sharp S."/>
            <person name="Simmonds M."/>
            <person name="Skelton J."/>
            <person name="Squares R."/>
            <person name="Squares S."/>
            <person name="Stevens K."/>
            <person name="Unwin L."/>
            <person name="Whitehead S."/>
            <person name="Barrell B.G."/>
            <person name="Maskell D.J."/>
        </authorList>
    </citation>
    <scope>NUCLEOTIDE SEQUENCE [LARGE SCALE GENOMIC DNA]</scope>
    <source>
        <strain>Tohama I / ATCC BAA-589 / NCTC 13251</strain>
    </source>
</reference>
<accession>Q7VXD7</accession>